<organism>
    <name type="scientific">Staphylococcus aureus (strain COL)</name>
    <dbReference type="NCBI Taxonomy" id="93062"/>
    <lineage>
        <taxon>Bacteria</taxon>
        <taxon>Bacillati</taxon>
        <taxon>Bacillota</taxon>
        <taxon>Bacilli</taxon>
        <taxon>Bacillales</taxon>
        <taxon>Staphylococcaceae</taxon>
        <taxon>Staphylococcus</taxon>
    </lineage>
</organism>
<accession>Q5HHF6</accession>
<feature type="chain" id="PRO_0000271482" description="Acid sugar phosphatase">
    <location>
        <begin position="1"/>
        <end position="259"/>
    </location>
</feature>
<name>NAGD_STAAC</name>
<sequence>MKQYKAYLIDLDGTMYMGTDEIDGAKQFIDYLNVKGIPHLYVTNNSTKTPEQVTEKLREMHIDAKPEEVVTSALATADYISEQSPGASVYMLGGSGLNTALTEAGLVIKNDEHVDYVVIGLDEQVTYEKLAIATLGVRNGATFISTNPDVSIPKERGLLPGNGAITSVVSVSTGVSPQFIGKPEPIIMVKALEILGLDKSEVAMVGDLYDTDIMSGINVGMDTIHVQTGVSTLEDVQNKNVPPTYSFKDLNEAIAELEK</sequence>
<evidence type="ECO:0000250" key="1">
    <source>
        <dbReference type="UniProtKB" id="Q99VE8"/>
    </source>
</evidence>
<evidence type="ECO:0000305" key="2"/>
<dbReference type="EC" id="3.1.3.-" evidence="1"/>
<dbReference type="EMBL" id="CP000046">
    <property type="protein sequence ID" value="AAW37900.1"/>
    <property type="molecule type" value="Genomic_DNA"/>
</dbReference>
<dbReference type="RefSeq" id="WP_000816184.1">
    <property type="nucleotide sequence ID" value="NZ_JBGOFO010000002.1"/>
</dbReference>
<dbReference type="SMR" id="Q5HHF6"/>
<dbReference type="KEGG" id="sac:SACOL0931"/>
<dbReference type="HOGENOM" id="CLU_043473_1_1_9"/>
<dbReference type="Proteomes" id="UP000000530">
    <property type="component" value="Chromosome"/>
</dbReference>
<dbReference type="GO" id="GO:0005737">
    <property type="term" value="C:cytoplasm"/>
    <property type="evidence" value="ECO:0007669"/>
    <property type="project" value="TreeGrafter"/>
</dbReference>
<dbReference type="GO" id="GO:0046872">
    <property type="term" value="F:metal ion binding"/>
    <property type="evidence" value="ECO:0007669"/>
    <property type="project" value="UniProtKB-KW"/>
</dbReference>
<dbReference type="GO" id="GO:0016791">
    <property type="term" value="F:phosphatase activity"/>
    <property type="evidence" value="ECO:0007669"/>
    <property type="project" value="TreeGrafter"/>
</dbReference>
<dbReference type="CDD" id="cd07530">
    <property type="entry name" value="HAD_Pase_UmpH-like"/>
    <property type="match status" value="1"/>
</dbReference>
<dbReference type="FunFam" id="3.40.50.1000:FF:000053">
    <property type="entry name" value="TIGR01457 family HAD hydrolase"/>
    <property type="match status" value="1"/>
</dbReference>
<dbReference type="Gene3D" id="3.40.50.1000">
    <property type="entry name" value="HAD superfamily/HAD-like"/>
    <property type="match status" value="2"/>
</dbReference>
<dbReference type="InterPro" id="IPR036412">
    <property type="entry name" value="HAD-like_sf"/>
</dbReference>
<dbReference type="InterPro" id="IPR006357">
    <property type="entry name" value="HAD-SF_hydro_IIA"/>
</dbReference>
<dbReference type="InterPro" id="IPR006354">
    <property type="entry name" value="HAD-SF_hydro_IIA_hyp1"/>
</dbReference>
<dbReference type="InterPro" id="IPR023214">
    <property type="entry name" value="HAD_sf"/>
</dbReference>
<dbReference type="NCBIfam" id="TIGR01460">
    <property type="entry name" value="HAD-SF-IIA"/>
    <property type="match status" value="1"/>
</dbReference>
<dbReference type="NCBIfam" id="TIGR01457">
    <property type="entry name" value="HAD-SF-IIA-hyp2"/>
    <property type="match status" value="1"/>
</dbReference>
<dbReference type="PANTHER" id="PTHR19288">
    <property type="entry name" value="4-NITROPHENYLPHOSPHATASE-RELATED"/>
    <property type="match status" value="1"/>
</dbReference>
<dbReference type="PANTHER" id="PTHR19288:SF46">
    <property type="entry name" value="HALOACID DEHALOGENASE-LIKE HYDROLASE DOMAIN-CONTAINING PROTEIN 2"/>
    <property type="match status" value="1"/>
</dbReference>
<dbReference type="Pfam" id="PF13344">
    <property type="entry name" value="Hydrolase_6"/>
    <property type="match status" value="1"/>
</dbReference>
<dbReference type="Pfam" id="PF13242">
    <property type="entry name" value="Hydrolase_like"/>
    <property type="match status" value="1"/>
</dbReference>
<dbReference type="PIRSF" id="PIRSF000915">
    <property type="entry name" value="PGP-type_phosphatase"/>
    <property type="match status" value="1"/>
</dbReference>
<dbReference type="SFLD" id="SFLDG01139">
    <property type="entry name" value="C2.A:_Pyridoxal_Phosphate_Phos"/>
    <property type="match status" value="1"/>
</dbReference>
<dbReference type="SFLD" id="SFLDS00003">
    <property type="entry name" value="Haloacid_Dehalogenase"/>
    <property type="match status" value="1"/>
</dbReference>
<dbReference type="SUPFAM" id="SSF56784">
    <property type="entry name" value="HAD-like"/>
    <property type="match status" value="1"/>
</dbReference>
<comment type="function">
    <text evidence="1">Catalyzes the dephosphorylation of 2-6 carbon acid sugars in vitro.</text>
</comment>
<comment type="cofactor">
    <cofactor evidence="1">
        <name>Mg(2+)</name>
        <dbReference type="ChEBI" id="CHEBI:18420"/>
    </cofactor>
</comment>
<comment type="similarity">
    <text evidence="2">Belongs to the HAD-like hydrolase superfamily. NagD family.</text>
</comment>
<gene>
    <name type="primary">nagD</name>
    <name type="ordered locus">SACOL0931</name>
</gene>
<reference key="1">
    <citation type="journal article" date="2005" name="J. Bacteriol.">
        <title>Insights on evolution of virulence and resistance from the complete genome analysis of an early methicillin-resistant Staphylococcus aureus strain and a biofilm-producing methicillin-resistant Staphylococcus epidermidis strain.</title>
        <authorList>
            <person name="Gill S.R."/>
            <person name="Fouts D.E."/>
            <person name="Archer G.L."/>
            <person name="Mongodin E.F."/>
            <person name="DeBoy R.T."/>
            <person name="Ravel J."/>
            <person name="Paulsen I.T."/>
            <person name="Kolonay J.F."/>
            <person name="Brinkac L.M."/>
            <person name="Beanan M.J."/>
            <person name="Dodson R.J."/>
            <person name="Daugherty S.C."/>
            <person name="Madupu R."/>
            <person name="Angiuoli S.V."/>
            <person name="Durkin A.S."/>
            <person name="Haft D.H."/>
            <person name="Vamathevan J.J."/>
            <person name="Khouri H."/>
            <person name="Utterback T.R."/>
            <person name="Lee C."/>
            <person name="Dimitrov G."/>
            <person name="Jiang L."/>
            <person name="Qin H."/>
            <person name="Weidman J."/>
            <person name="Tran K."/>
            <person name="Kang K.H."/>
            <person name="Hance I.R."/>
            <person name="Nelson K.E."/>
            <person name="Fraser C.M."/>
        </authorList>
    </citation>
    <scope>NUCLEOTIDE SEQUENCE [LARGE SCALE GENOMIC DNA]</scope>
    <source>
        <strain>COL</strain>
    </source>
</reference>
<proteinExistence type="inferred from homology"/>
<keyword id="KW-0378">Hydrolase</keyword>
<keyword id="KW-0460">Magnesium</keyword>
<keyword id="KW-0479">Metal-binding</keyword>
<protein>
    <recommendedName>
        <fullName evidence="1">Acid sugar phosphatase</fullName>
        <ecNumber evidence="1">3.1.3.-</ecNumber>
    </recommendedName>
</protein>